<keyword id="KW-0175">Coiled coil</keyword>
<keyword id="KW-0963">Cytoplasm</keyword>
<keyword id="KW-0479">Metal-binding</keyword>
<keyword id="KW-0539">Nucleus</keyword>
<keyword id="KW-1185">Reference proteome</keyword>
<keyword id="KW-0677">Repeat</keyword>
<keyword id="KW-0862">Zinc</keyword>
<keyword id="KW-0863">Zinc-finger</keyword>
<accession>Q6DD06</accession>
<feature type="chain" id="PRO_0000324647" description="Zinc finger CCCH domain-containing protein 15">
    <location>
        <begin position="1"/>
        <end position="426"/>
    </location>
</feature>
<feature type="zinc finger region" description="C3H1-type 1" evidence="3">
    <location>
        <begin position="100"/>
        <end position="127"/>
    </location>
</feature>
<feature type="zinc finger region" description="C3H1-type 2" evidence="3">
    <location>
        <begin position="175"/>
        <end position="213"/>
    </location>
</feature>
<feature type="region of interest" description="Disordered" evidence="4">
    <location>
        <begin position="1"/>
        <end position="27"/>
    </location>
</feature>
<feature type="region of interest" description="Disordered" evidence="4">
    <location>
        <begin position="51"/>
        <end position="74"/>
    </location>
</feature>
<feature type="region of interest" description="Required for interaction with DRG1" evidence="1">
    <location>
        <begin position="237"/>
        <end position="261"/>
    </location>
</feature>
<feature type="coiled-coil region" evidence="2">
    <location>
        <begin position="62"/>
        <end position="87"/>
    </location>
</feature>
<feature type="coiled-coil region" evidence="2">
    <location>
        <begin position="257"/>
        <end position="283"/>
    </location>
</feature>
<feature type="compositionally biased region" description="Low complexity" evidence="4">
    <location>
        <begin position="1"/>
        <end position="13"/>
    </location>
</feature>
<feature type="compositionally biased region" description="Basic and acidic residues" evidence="4">
    <location>
        <begin position="14"/>
        <end position="27"/>
    </location>
</feature>
<feature type="compositionally biased region" description="Basic and acidic residues" evidence="4">
    <location>
        <begin position="65"/>
        <end position="74"/>
    </location>
</feature>
<comment type="function">
    <text evidence="1">Protects drg1 from proteolytic degradation.</text>
</comment>
<comment type="subunit">
    <text evidence="1">Interacts with drg1.</text>
</comment>
<comment type="subcellular location">
    <subcellularLocation>
        <location evidence="1">Cytoplasm</location>
    </subcellularLocation>
    <subcellularLocation>
        <location evidence="1">Nucleus</location>
    </subcellularLocation>
</comment>
<comment type="tissue specificity">
    <text evidence="5">Strongly expressed in ovary. Moderately expressed in brain, kidney, spleen, testis, intestine and colon.</text>
</comment>
<comment type="developmental stage">
    <text evidence="5">Weakly expressed in late gastrula. Strongly expressed from late neurula (stages 20-22) to tadpole (stages 40-41). At stage 22, expressed in blood islands, somites, eyes, trunk neural crest, mandibular crest segment, hyoid crest segment and branchial crest segment. At stage 32, expressed in otic vesicle, pronephros, forebraiin, midbrain, hindbrain, branchial arch, eyes, lens, spinal cord and notochord.</text>
</comment>
<comment type="similarity">
    <text evidence="6">Belongs to the ZC3H15/TMA46 family.</text>
</comment>
<sequence length="426" mass="48713">MPPKKAPAAPQASKKTEQKKKEKIIEDKTFGLKNKKGAKQQKFIKNVTHQVKSGQQNPRLVAQAEGDKKNKKDDKMKELQELNDLFKPVVVAQKVSKGADPKSVVCAFFKQGQCTKGDKCKFSHDLSLERKCEKRSVYVDGRDDELEKDTMENWDEKKLEEVVNKKHGEAEKIKAKTQIVCKFFLEAIENNKYGWFWVCPGGGDTCMYRHALPPGFVLKKEKVKEDKDEDISLEDLIEKERAALGPNVTRITLESFLQWKKRKRADRILKLEEEMEKRKEDFKSGKSLGVSGREVFEFRPELINDDDEEADDASYTFELEDSEAEEIDDVQDIDLSRYVLKDVDETGITVASCERFSSYVASTEKDENKLCVASGGVMENENQSEEEQEGDLENGFVDAVPVDENLFTGEDMDELEEELYTLDLEK</sequence>
<reference key="1">
    <citation type="journal article" date="2005" name="Genes Cells">
        <title>Identification of DRG family regulatory proteins (DFRPs): specific regulation of DRG1 and DRG2.</title>
        <authorList>
            <person name="Ishikawa K."/>
            <person name="Azuma S."/>
            <person name="Ikawa S."/>
            <person name="Semba K."/>
            <person name="Inoue J."/>
        </authorList>
    </citation>
    <scope>NUCLEOTIDE SEQUENCE [MRNA]</scope>
    <scope>TISSUE SPECIFICITY</scope>
    <scope>DEVELOPMENTAL STAGE</scope>
</reference>
<reference key="2">
    <citation type="submission" date="2004-07" db="EMBL/GenBank/DDBJ databases">
        <authorList>
            <consortium name="NIH - Xenopus Gene Collection (XGC) project"/>
        </authorList>
    </citation>
    <scope>NUCLEOTIDE SEQUENCE [LARGE SCALE MRNA]</scope>
    <source>
        <tissue>Embryo</tissue>
    </source>
</reference>
<proteinExistence type="evidence at transcript level"/>
<dbReference type="EMBL" id="AB185934">
    <property type="protein sequence ID" value="BAD89267.1"/>
    <property type="molecule type" value="mRNA"/>
</dbReference>
<dbReference type="EMBL" id="BC077826">
    <property type="protein sequence ID" value="AAH77826.1"/>
    <property type="molecule type" value="mRNA"/>
</dbReference>
<dbReference type="RefSeq" id="NP_001086961.1">
    <property type="nucleotide sequence ID" value="NM_001093492.1"/>
</dbReference>
<dbReference type="SMR" id="Q6DD06"/>
<dbReference type="BioGRID" id="103656">
    <property type="interactions" value="1"/>
</dbReference>
<dbReference type="IntAct" id="Q6DD06">
    <property type="interactions" value="1"/>
</dbReference>
<dbReference type="DNASU" id="446796"/>
<dbReference type="GeneID" id="446796"/>
<dbReference type="KEGG" id="xla:446796"/>
<dbReference type="AGR" id="Xenbase:XB-GENE-5800445"/>
<dbReference type="CTD" id="446796"/>
<dbReference type="Xenbase" id="XB-GENE-5800445">
    <property type="gene designation" value="zc3h15.L"/>
</dbReference>
<dbReference type="OMA" id="AMIFKPV"/>
<dbReference type="OrthoDB" id="278280at2759"/>
<dbReference type="Proteomes" id="UP000186698">
    <property type="component" value="Chromosome 9_10L"/>
</dbReference>
<dbReference type="Bgee" id="446796">
    <property type="expression patterns" value="Expressed in gastrula and 19 other cell types or tissues"/>
</dbReference>
<dbReference type="GO" id="GO:0005829">
    <property type="term" value="C:cytosol"/>
    <property type="evidence" value="ECO:0000318"/>
    <property type="project" value="GO_Central"/>
</dbReference>
<dbReference type="GO" id="GO:0005634">
    <property type="term" value="C:nucleus"/>
    <property type="evidence" value="ECO:0007669"/>
    <property type="project" value="UniProtKB-SubCell"/>
</dbReference>
<dbReference type="GO" id="GO:0003729">
    <property type="term" value="F:mRNA binding"/>
    <property type="evidence" value="ECO:0007669"/>
    <property type="project" value="TreeGrafter"/>
</dbReference>
<dbReference type="GO" id="GO:0008270">
    <property type="term" value="F:zinc ion binding"/>
    <property type="evidence" value="ECO:0007669"/>
    <property type="project" value="UniProtKB-KW"/>
</dbReference>
<dbReference type="GO" id="GO:0002181">
    <property type="term" value="P:cytoplasmic translation"/>
    <property type="evidence" value="ECO:0000318"/>
    <property type="project" value="GO_Central"/>
</dbReference>
<dbReference type="FunFam" id="4.10.1000.10:FF:000050">
    <property type="entry name" value="AGAP008634-PA"/>
    <property type="match status" value="1"/>
</dbReference>
<dbReference type="Gene3D" id="6.20.400.10">
    <property type="match status" value="1"/>
</dbReference>
<dbReference type="Gene3D" id="4.10.1000.10">
    <property type="entry name" value="Zinc finger, CCCH-type"/>
    <property type="match status" value="1"/>
</dbReference>
<dbReference type="InterPro" id="IPR032378">
    <property type="entry name" value="ZC3H15/TMA46_C"/>
</dbReference>
<dbReference type="InterPro" id="IPR000571">
    <property type="entry name" value="Znf_CCCH"/>
</dbReference>
<dbReference type="InterPro" id="IPR036855">
    <property type="entry name" value="Znf_CCCH_sf"/>
</dbReference>
<dbReference type="PANTHER" id="PTHR12681:SF0">
    <property type="entry name" value="ZINC FINGER CCCH DOMAIN-CONTAINING PROTEIN 15"/>
    <property type="match status" value="1"/>
</dbReference>
<dbReference type="PANTHER" id="PTHR12681">
    <property type="entry name" value="ZINC FINGER-CONTAINING PROTEIN P48ZNF"/>
    <property type="match status" value="1"/>
</dbReference>
<dbReference type="Pfam" id="PF16543">
    <property type="entry name" value="DFRP_C"/>
    <property type="match status" value="1"/>
</dbReference>
<dbReference type="Pfam" id="PF00642">
    <property type="entry name" value="zf-CCCH"/>
    <property type="match status" value="1"/>
</dbReference>
<dbReference type="SMART" id="SM00356">
    <property type="entry name" value="ZnF_C3H1"/>
    <property type="match status" value="2"/>
</dbReference>
<dbReference type="SUPFAM" id="SSF90229">
    <property type="entry name" value="CCCH zinc finger"/>
    <property type="match status" value="1"/>
</dbReference>
<dbReference type="PROSITE" id="PS50103">
    <property type="entry name" value="ZF_C3H1"/>
    <property type="match status" value="2"/>
</dbReference>
<gene>
    <name type="primary">zc3h15</name>
    <name type="synonym">dfrp1</name>
</gene>
<organism>
    <name type="scientific">Xenopus laevis</name>
    <name type="common">African clawed frog</name>
    <dbReference type="NCBI Taxonomy" id="8355"/>
    <lineage>
        <taxon>Eukaryota</taxon>
        <taxon>Metazoa</taxon>
        <taxon>Chordata</taxon>
        <taxon>Craniata</taxon>
        <taxon>Vertebrata</taxon>
        <taxon>Euteleostomi</taxon>
        <taxon>Amphibia</taxon>
        <taxon>Batrachia</taxon>
        <taxon>Anura</taxon>
        <taxon>Pipoidea</taxon>
        <taxon>Pipidae</taxon>
        <taxon>Xenopodinae</taxon>
        <taxon>Xenopus</taxon>
        <taxon>Xenopus</taxon>
    </lineage>
</organism>
<evidence type="ECO:0000250" key="1"/>
<evidence type="ECO:0000255" key="2"/>
<evidence type="ECO:0000255" key="3">
    <source>
        <dbReference type="PROSITE-ProRule" id="PRU00723"/>
    </source>
</evidence>
<evidence type="ECO:0000256" key="4">
    <source>
        <dbReference type="SAM" id="MobiDB-lite"/>
    </source>
</evidence>
<evidence type="ECO:0000269" key="5">
    <source>
    </source>
</evidence>
<evidence type="ECO:0000305" key="6"/>
<protein>
    <recommendedName>
        <fullName>Zinc finger CCCH domain-containing protein 15</fullName>
    </recommendedName>
    <alternativeName>
        <fullName>DRG family-regulatory protein 1</fullName>
    </alternativeName>
</protein>
<name>ZC3HF_XENLA</name>